<evidence type="ECO:0000255" key="1"/>
<evidence type="ECO:0000255" key="2">
    <source>
        <dbReference type="PROSITE-ProRule" id="PRU00114"/>
    </source>
</evidence>
<evidence type="ECO:0000255" key="3">
    <source>
        <dbReference type="PROSITE-ProRule" id="PRU00316"/>
    </source>
</evidence>
<evidence type="ECO:0000256" key="4">
    <source>
        <dbReference type="SAM" id="MobiDB-lite"/>
    </source>
</evidence>
<evidence type="ECO:0000269" key="5">
    <source>
    </source>
</evidence>
<evidence type="ECO:0000305" key="6"/>
<gene>
    <name type="primary">LRRN1</name>
    <name type="synonym">KIAA1497</name>
    <name type="ORF">Nbla10449</name>
    <name type="ORF">UNQ693/PRO1338</name>
</gene>
<feature type="signal peptide" evidence="5">
    <location>
        <begin position="1"/>
        <end position="25"/>
    </location>
</feature>
<feature type="chain" id="PRO_0000014847" description="Leucine-rich repeat neuronal protein 1">
    <location>
        <begin position="26"/>
        <end position="716"/>
    </location>
</feature>
<feature type="topological domain" description="Extracellular" evidence="1">
    <location>
        <begin position="26"/>
        <end position="631"/>
    </location>
</feature>
<feature type="transmembrane region" description="Helical" evidence="1">
    <location>
        <begin position="632"/>
        <end position="652"/>
    </location>
</feature>
<feature type="topological domain" description="Cytoplasmic" evidence="1">
    <location>
        <begin position="653"/>
        <end position="716"/>
    </location>
</feature>
<feature type="domain" description="LRRNT">
    <location>
        <begin position="26"/>
        <end position="72"/>
    </location>
</feature>
<feature type="repeat" description="LRR 1">
    <location>
        <begin position="73"/>
        <end position="95"/>
    </location>
</feature>
<feature type="repeat" description="LRR 2">
    <location>
        <begin position="96"/>
        <end position="117"/>
    </location>
</feature>
<feature type="repeat" description="LRR 3">
    <location>
        <begin position="120"/>
        <end position="141"/>
    </location>
</feature>
<feature type="repeat" description="LRR 4">
    <location>
        <begin position="144"/>
        <end position="165"/>
    </location>
</feature>
<feature type="repeat" description="LRR 5">
    <location>
        <begin position="168"/>
        <end position="189"/>
    </location>
</feature>
<feature type="repeat" description="LRR 6">
    <location>
        <begin position="192"/>
        <end position="213"/>
    </location>
</feature>
<feature type="repeat" description="LRR 7">
    <location>
        <begin position="216"/>
        <end position="237"/>
    </location>
</feature>
<feature type="repeat" description="LRR 8">
    <location>
        <begin position="240"/>
        <end position="261"/>
    </location>
</feature>
<feature type="repeat" description="LRR 9">
    <location>
        <begin position="264"/>
        <end position="285"/>
    </location>
</feature>
<feature type="repeat" description="LRR 10">
    <location>
        <begin position="313"/>
        <end position="335"/>
    </location>
</feature>
<feature type="repeat" description="LRR 11">
    <location>
        <begin position="338"/>
        <end position="359"/>
    </location>
</feature>
<feature type="domain" description="LRRCT">
    <location>
        <begin position="371"/>
        <end position="424"/>
    </location>
</feature>
<feature type="domain" description="Ig-like C2-type">
    <location>
        <begin position="424"/>
        <end position="515"/>
    </location>
</feature>
<feature type="domain" description="Fibronectin type-III" evidence="3">
    <location>
        <begin position="525"/>
        <end position="617"/>
    </location>
</feature>
<feature type="region of interest" description="Disordered" evidence="4">
    <location>
        <begin position="691"/>
        <end position="716"/>
    </location>
</feature>
<feature type="compositionally biased region" description="Basic and acidic residues" evidence="4">
    <location>
        <begin position="691"/>
        <end position="700"/>
    </location>
</feature>
<feature type="compositionally biased region" description="Polar residues" evidence="4">
    <location>
        <begin position="702"/>
        <end position="716"/>
    </location>
</feature>
<feature type="glycosylation site" description="N-linked (GlcNAc...) asparagine" evidence="1">
    <location>
        <position position="96"/>
    </location>
</feature>
<feature type="glycosylation site" description="N-linked (GlcNAc...) asparagine" evidence="1">
    <location>
        <position position="117"/>
    </location>
</feature>
<feature type="glycosylation site" description="N-linked (GlcNAc...) asparagine" evidence="1">
    <location>
        <position position="385"/>
    </location>
</feature>
<feature type="glycosylation site" description="N-linked (GlcNAc...) asparagine" evidence="1">
    <location>
        <position position="517"/>
    </location>
</feature>
<feature type="disulfide bond" evidence="2">
    <location>
        <begin position="447"/>
        <end position="499"/>
    </location>
</feature>
<feature type="sequence variant" id="VAR_049896" description="In dbSNP:rs35362954.">
    <original>L</original>
    <variation>V</variation>
    <location>
        <position position="395"/>
    </location>
</feature>
<feature type="sequence variant" id="VAR_049897" description="In dbSNP:rs34611357.">
    <original>T</original>
    <variation>P</variation>
    <location>
        <position position="702"/>
    </location>
</feature>
<feature type="sequence conflict" description="In Ref. 4; AAH34947." evidence="6" ref="4">
    <original>N</original>
    <variation>S</variation>
    <location>
        <position position="264"/>
    </location>
</feature>
<dbReference type="EMBL" id="AB074161">
    <property type="protein sequence ID" value="BAE45733.1"/>
    <property type="molecule type" value="mRNA"/>
</dbReference>
<dbReference type="EMBL" id="AB040930">
    <property type="protein sequence ID" value="BAA96021.1"/>
    <property type="status" value="ALT_INIT"/>
    <property type="molecule type" value="mRNA"/>
</dbReference>
<dbReference type="EMBL" id="AY358312">
    <property type="protein sequence ID" value="AAQ88679.1"/>
    <property type="molecule type" value="mRNA"/>
</dbReference>
<dbReference type="EMBL" id="BC034947">
    <property type="protein sequence ID" value="AAH34947.1"/>
    <property type="molecule type" value="mRNA"/>
</dbReference>
<dbReference type="EMBL" id="AK023273">
    <property type="protein sequence ID" value="BAB14500.1"/>
    <property type="status" value="ALT_INIT"/>
    <property type="molecule type" value="mRNA"/>
</dbReference>
<dbReference type="CCDS" id="CCDS33685.1"/>
<dbReference type="RefSeq" id="NP_001311117.1">
    <property type="nucleotide sequence ID" value="NM_001324188.2"/>
</dbReference>
<dbReference type="RefSeq" id="NP_001311118.1">
    <property type="nucleotide sequence ID" value="NM_001324189.2"/>
</dbReference>
<dbReference type="RefSeq" id="NP_065924.3">
    <property type="nucleotide sequence ID" value="NM_020873.6"/>
</dbReference>
<dbReference type="RefSeq" id="XP_047304600.1">
    <property type="nucleotide sequence ID" value="XM_047448644.1"/>
</dbReference>
<dbReference type="RefSeq" id="XP_054203380.1">
    <property type="nucleotide sequence ID" value="XM_054347405.1"/>
</dbReference>
<dbReference type="SMR" id="Q6UXK5"/>
<dbReference type="BioGRID" id="121675">
    <property type="interactions" value="7"/>
</dbReference>
<dbReference type="FunCoup" id="Q6UXK5">
    <property type="interactions" value="183"/>
</dbReference>
<dbReference type="IntAct" id="Q6UXK5">
    <property type="interactions" value="6"/>
</dbReference>
<dbReference type="STRING" id="9606.ENSP00000314901"/>
<dbReference type="CarbonylDB" id="Q6UXK5"/>
<dbReference type="GlyCosmos" id="Q6UXK5">
    <property type="glycosylation" value="4 sites, No reported glycans"/>
</dbReference>
<dbReference type="GlyGen" id="Q6UXK5">
    <property type="glycosylation" value="7 sites, 4 N-linked glycans (1 site), 1 O-linked glycan (2 sites)"/>
</dbReference>
<dbReference type="iPTMnet" id="Q6UXK5"/>
<dbReference type="PhosphoSitePlus" id="Q6UXK5"/>
<dbReference type="BioMuta" id="LRRN1"/>
<dbReference type="DMDM" id="60390188"/>
<dbReference type="jPOST" id="Q6UXK5"/>
<dbReference type="MassIVE" id="Q6UXK5"/>
<dbReference type="PaxDb" id="9606-ENSP00000314901"/>
<dbReference type="PeptideAtlas" id="Q6UXK5"/>
<dbReference type="ProteomicsDB" id="67634"/>
<dbReference type="Pumba" id="Q6UXK5"/>
<dbReference type="Antibodypedia" id="2639">
    <property type="antibodies" value="91 antibodies from 21 providers"/>
</dbReference>
<dbReference type="DNASU" id="57633"/>
<dbReference type="Ensembl" id="ENST00000319331.4">
    <property type="protein sequence ID" value="ENSP00000314901.3"/>
    <property type="gene ID" value="ENSG00000175928.6"/>
</dbReference>
<dbReference type="GeneID" id="57633"/>
<dbReference type="KEGG" id="hsa:57633"/>
<dbReference type="MANE-Select" id="ENST00000319331.4">
    <property type="protein sequence ID" value="ENSP00000314901.3"/>
    <property type="RefSeq nucleotide sequence ID" value="NM_020873.7"/>
    <property type="RefSeq protein sequence ID" value="NP_065924.3"/>
</dbReference>
<dbReference type="UCSC" id="uc003bpt.4">
    <property type="organism name" value="human"/>
</dbReference>
<dbReference type="AGR" id="HGNC:20980"/>
<dbReference type="CTD" id="57633"/>
<dbReference type="DisGeNET" id="57633"/>
<dbReference type="GeneCards" id="LRRN1"/>
<dbReference type="HGNC" id="HGNC:20980">
    <property type="gene designation" value="LRRN1"/>
</dbReference>
<dbReference type="HPA" id="ENSG00000175928">
    <property type="expression patterns" value="Tissue enhanced (brain)"/>
</dbReference>
<dbReference type="MIM" id="619623">
    <property type="type" value="gene"/>
</dbReference>
<dbReference type="neXtProt" id="NX_Q6UXK5"/>
<dbReference type="OpenTargets" id="ENSG00000175928"/>
<dbReference type="PharmGKB" id="PA134935557"/>
<dbReference type="VEuPathDB" id="HostDB:ENSG00000175928"/>
<dbReference type="eggNOG" id="KOG0619">
    <property type="taxonomic scope" value="Eukaryota"/>
</dbReference>
<dbReference type="GeneTree" id="ENSGT00940000157154"/>
<dbReference type="HOGENOM" id="CLU_000288_18_18_1"/>
<dbReference type="InParanoid" id="Q6UXK5"/>
<dbReference type="OMA" id="ANQCLPM"/>
<dbReference type="OrthoDB" id="266138at2759"/>
<dbReference type="PAN-GO" id="Q6UXK5">
    <property type="GO annotations" value="2 GO annotations based on evolutionary models"/>
</dbReference>
<dbReference type="PhylomeDB" id="Q6UXK5"/>
<dbReference type="TreeFam" id="TF334360"/>
<dbReference type="PathwayCommons" id="Q6UXK5"/>
<dbReference type="SignaLink" id="Q6UXK5"/>
<dbReference type="BioGRID-ORCS" id="57633">
    <property type="hits" value="19 hits in 1145 CRISPR screens"/>
</dbReference>
<dbReference type="GeneWiki" id="LRRN1"/>
<dbReference type="GenomeRNAi" id="57633"/>
<dbReference type="Pharos" id="Q6UXK5">
    <property type="development level" value="Tbio"/>
</dbReference>
<dbReference type="PRO" id="PR:Q6UXK5"/>
<dbReference type="Proteomes" id="UP000005640">
    <property type="component" value="Chromosome 3"/>
</dbReference>
<dbReference type="RNAct" id="Q6UXK5">
    <property type="molecule type" value="protein"/>
</dbReference>
<dbReference type="Bgee" id="ENSG00000175928">
    <property type="expression patterns" value="Expressed in ventricular zone and 161 other cell types or tissues"/>
</dbReference>
<dbReference type="GO" id="GO:0031012">
    <property type="term" value="C:extracellular matrix"/>
    <property type="evidence" value="ECO:0000318"/>
    <property type="project" value="GO_Central"/>
</dbReference>
<dbReference type="GO" id="GO:0005615">
    <property type="term" value="C:extracellular space"/>
    <property type="evidence" value="ECO:0000318"/>
    <property type="project" value="GO_Central"/>
</dbReference>
<dbReference type="GO" id="GO:0016020">
    <property type="term" value="C:membrane"/>
    <property type="evidence" value="ECO:0007669"/>
    <property type="project" value="UniProtKB-SubCell"/>
</dbReference>
<dbReference type="GO" id="GO:0051965">
    <property type="term" value="P:positive regulation of synapse assembly"/>
    <property type="evidence" value="ECO:0007669"/>
    <property type="project" value="Ensembl"/>
</dbReference>
<dbReference type="CDD" id="cd00063">
    <property type="entry name" value="FN3"/>
    <property type="match status" value="1"/>
</dbReference>
<dbReference type="FunFam" id="2.60.40.10:FF:000355">
    <property type="entry name" value="Leucine-rich repeat neuronal protein 1"/>
    <property type="match status" value="1"/>
</dbReference>
<dbReference type="FunFam" id="2.60.40.10:FF:000481">
    <property type="entry name" value="Leucine-rich repeat neuronal protein 1"/>
    <property type="match status" value="1"/>
</dbReference>
<dbReference type="FunFam" id="3.80.10.10:FF:000056">
    <property type="entry name" value="Leucine-rich repeat neuronal protein 1"/>
    <property type="match status" value="1"/>
</dbReference>
<dbReference type="FunFam" id="3.80.10.10:FF:000074">
    <property type="entry name" value="Leucine-rich repeat neuronal protein 1"/>
    <property type="match status" value="1"/>
</dbReference>
<dbReference type="FunFam" id="3.80.10.10:FF:000090">
    <property type="entry name" value="Leucine-rich repeat neuronal protein 1"/>
    <property type="match status" value="1"/>
</dbReference>
<dbReference type="Gene3D" id="2.60.40.10">
    <property type="entry name" value="Immunoglobulins"/>
    <property type="match status" value="2"/>
</dbReference>
<dbReference type="Gene3D" id="3.80.10.10">
    <property type="entry name" value="Ribonuclease Inhibitor"/>
    <property type="match status" value="3"/>
</dbReference>
<dbReference type="InterPro" id="IPR000483">
    <property type="entry name" value="Cys-rich_flank_reg_C"/>
</dbReference>
<dbReference type="InterPro" id="IPR003961">
    <property type="entry name" value="FN3_dom"/>
</dbReference>
<dbReference type="InterPro" id="IPR036116">
    <property type="entry name" value="FN3_sf"/>
</dbReference>
<dbReference type="InterPro" id="IPR007110">
    <property type="entry name" value="Ig-like_dom"/>
</dbReference>
<dbReference type="InterPro" id="IPR036179">
    <property type="entry name" value="Ig-like_dom_sf"/>
</dbReference>
<dbReference type="InterPro" id="IPR013783">
    <property type="entry name" value="Ig-like_fold"/>
</dbReference>
<dbReference type="InterPro" id="IPR013098">
    <property type="entry name" value="Ig_I-set"/>
</dbReference>
<dbReference type="InterPro" id="IPR003599">
    <property type="entry name" value="Ig_sub"/>
</dbReference>
<dbReference type="InterPro" id="IPR003598">
    <property type="entry name" value="Ig_sub2"/>
</dbReference>
<dbReference type="InterPro" id="IPR001611">
    <property type="entry name" value="Leu-rich_rpt"/>
</dbReference>
<dbReference type="InterPro" id="IPR003591">
    <property type="entry name" value="Leu-rich_rpt_typical-subtyp"/>
</dbReference>
<dbReference type="InterPro" id="IPR050467">
    <property type="entry name" value="LRFN"/>
</dbReference>
<dbReference type="InterPro" id="IPR032675">
    <property type="entry name" value="LRR_dom_sf"/>
</dbReference>
<dbReference type="PANTHER" id="PTHR45842:SF22">
    <property type="entry name" value="INSULIN-LIKE GROWTH FACTOR-BINDING PROTEIN COMPLEX ACID LABILE SUBUNIT ISOFORM X1"/>
    <property type="match status" value="1"/>
</dbReference>
<dbReference type="PANTHER" id="PTHR45842">
    <property type="entry name" value="SYNAPTIC ADHESION-LIKE MOLECULE SALM"/>
    <property type="match status" value="1"/>
</dbReference>
<dbReference type="Pfam" id="PF07679">
    <property type="entry name" value="I-set"/>
    <property type="match status" value="1"/>
</dbReference>
<dbReference type="Pfam" id="PF13855">
    <property type="entry name" value="LRR_8"/>
    <property type="match status" value="3"/>
</dbReference>
<dbReference type="SMART" id="SM00409">
    <property type="entry name" value="IG"/>
    <property type="match status" value="1"/>
</dbReference>
<dbReference type="SMART" id="SM00408">
    <property type="entry name" value="IGc2"/>
    <property type="match status" value="1"/>
</dbReference>
<dbReference type="SMART" id="SM00365">
    <property type="entry name" value="LRR_SD22"/>
    <property type="match status" value="4"/>
</dbReference>
<dbReference type="SMART" id="SM00369">
    <property type="entry name" value="LRR_TYP"/>
    <property type="match status" value="9"/>
</dbReference>
<dbReference type="SMART" id="SM00082">
    <property type="entry name" value="LRRCT"/>
    <property type="match status" value="1"/>
</dbReference>
<dbReference type="SUPFAM" id="SSF49265">
    <property type="entry name" value="Fibronectin type III"/>
    <property type="match status" value="1"/>
</dbReference>
<dbReference type="SUPFAM" id="SSF48726">
    <property type="entry name" value="Immunoglobulin"/>
    <property type="match status" value="1"/>
</dbReference>
<dbReference type="SUPFAM" id="SSF52058">
    <property type="entry name" value="L domain-like"/>
    <property type="match status" value="1"/>
</dbReference>
<dbReference type="PROSITE" id="PS50853">
    <property type="entry name" value="FN3"/>
    <property type="match status" value="1"/>
</dbReference>
<dbReference type="PROSITE" id="PS50835">
    <property type="entry name" value="IG_LIKE"/>
    <property type="match status" value="1"/>
</dbReference>
<dbReference type="PROSITE" id="PS51450">
    <property type="entry name" value="LRR"/>
    <property type="match status" value="10"/>
</dbReference>
<proteinExistence type="evidence at protein level"/>
<sequence length="716" mass="80716">MARMSFVIAACQLVLGLLMTSLTESSIQNSECPQLCVCEIRPWFTPQSTYREATTVDCNDLRLTRIPSNLSSDTQVLLLQSNNIAKTVDELQQLFNLTELDFSQNNFTNIKEVGLANLTQLTTLHLEENQITEMTDYCLQDLSNLQELYINHNQISTISAHAFAGLKNLLRLHLNSNKLKVIDSRWFDSTPNLEILMIGENPVIGILDMNFKPLANLRSLVLAGMYLTDIPGNALVGLDSLESLSFYDNKLVKVPQLALQKVPNLKFLDLNKNPIHKIQEGDFKNMLRLKELGINNMGELVSVDRYALDNLPELTKLEATNNPKLSYIHRLAFRSVPALESLMLNNNALNAIYQKTVESLPNLREISIHSNPLRCDCVIHWINSNKTNIRFMEPLSMFCAMPPEYKGHQVKEVLIQDSSEQCLPMISHDSFPNRLNVDIGTTVFLDCRAMAEPEPEIYWVTPIGNKITVETLSDKYKLSSEGTLEISNIQIEDSGRYTCVAQNVQGADTRVATIKVNGTLLDGTQVLKIYVKQTESHSILVSWKVNSNVMTSNLKWSSATMKIDNPHITYTARVPVDVHEYNLTHLQPSTDYEVCLTVSNIHQQTQKSCVNVTTKNAAFAVDISDQETSTALAAVMGSMFAVISLASIAVYFAKRFKRKNYHHSLKKYMQKTSSIPLNELYPPLINLWEGDSEKDKDGSADTKPTQVDTSRSYYMW</sequence>
<reference key="1">
    <citation type="journal article" date="2000" name="DNA Res.">
        <title>Prediction of the coding sequences of unidentified human genes. XVII. The complete sequences of 100 new cDNA clones from brain which code for large proteins in vitro.</title>
        <authorList>
            <person name="Nagase T."/>
            <person name="Kikuno R."/>
            <person name="Ishikawa K."/>
            <person name="Hirosawa M."/>
            <person name="Ohara O."/>
        </authorList>
    </citation>
    <scope>NUCLEOTIDE SEQUENCE [LARGE SCALE MRNA]</scope>
    <source>
        <tissue>Brain</tissue>
    </source>
</reference>
<reference key="2">
    <citation type="journal article" date="2003" name="Cancer Lett.">
        <title>Neuroblastoma oligo-capping cDNA project: toward the understanding of the genesis and biology of neuroblastoma.</title>
        <authorList>
            <person name="Ohira M."/>
            <person name="Morohashi A."/>
            <person name="Nakamura Y."/>
            <person name="Isogai E."/>
            <person name="Furuya K."/>
            <person name="Hamano S."/>
            <person name="Machida T."/>
            <person name="Aoyama M."/>
            <person name="Fukumura M."/>
            <person name="Miyazaki K."/>
            <person name="Suzuki Y."/>
            <person name="Sugano S."/>
            <person name="Hirato J."/>
            <person name="Nakagawara A."/>
        </authorList>
    </citation>
    <scope>NUCLEOTIDE SEQUENCE [LARGE SCALE MRNA]</scope>
    <source>
        <tissue>Neuroblastoma</tissue>
    </source>
</reference>
<reference key="3">
    <citation type="journal article" date="2003" name="Genome Res.">
        <title>The secreted protein discovery initiative (SPDI), a large-scale effort to identify novel human secreted and transmembrane proteins: a bioinformatics assessment.</title>
        <authorList>
            <person name="Clark H.F."/>
            <person name="Gurney A.L."/>
            <person name="Abaya E."/>
            <person name="Baker K."/>
            <person name="Baldwin D.T."/>
            <person name="Brush J."/>
            <person name="Chen J."/>
            <person name="Chow B."/>
            <person name="Chui C."/>
            <person name="Crowley C."/>
            <person name="Currell B."/>
            <person name="Deuel B."/>
            <person name="Dowd P."/>
            <person name="Eaton D."/>
            <person name="Foster J.S."/>
            <person name="Grimaldi C."/>
            <person name="Gu Q."/>
            <person name="Hass P.E."/>
            <person name="Heldens S."/>
            <person name="Huang A."/>
            <person name="Kim H.S."/>
            <person name="Klimowski L."/>
            <person name="Jin Y."/>
            <person name="Johnson S."/>
            <person name="Lee J."/>
            <person name="Lewis L."/>
            <person name="Liao D."/>
            <person name="Mark M.R."/>
            <person name="Robbie E."/>
            <person name="Sanchez C."/>
            <person name="Schoenfeld J."/>
            <person name="Seshagiri S."/>
            <person name="Simmons L."/>
            <person name="Singh J."/>
            <person name="Smith V."/>
            <person name="Stinson J."/>
            <person name="Vagts A."/>
            <person name="Vandlen R.L."/>
            <person name="Watanabe C."/>
            <person name="Wieand D."/>
            <person name="Woods K."/>
            <person name="Xie M.-H."/>
            <person name="Yansura D.G."/>
            <person name="Yi S."/>
            <person name="Yu G."/>
            <person name="Yuan J."/>
            <person name="Zhang M."/>
            <person name="Zhang Z."/>
            <person name="Goddard A.D."/>
            <person name="Wood W.I."/>
            <person name="Godowski P.J."/>
            <person name="Gray A.M."/>
        </authorList>
    </citation>
    <scope>NUCLEOTIDE SEQUENCE [LARGE SCALE MRNA]</scope>
</reference>
<reference key="4">
    <citation type="journal article" date="2004" name="Genome Res.">
        <title>The status, quality, and expansion of the NIH full-length cDNA project: the Mammalian Gene Collection (MGC).</title>
        <authorList>
            <consortium name="The MGC Project Team"/>
        </authorList>
    </citation>
    <scope>NUCLEOTIDE SEQUENCE [LARGE SCALE MRNA]</scope>
    <source>
        <tissue>Testis</tissue>
    </source>
</reference>
<reference key="5">
    <citation type="journal article" date="2004" name="Nat. Genet.">
        <title>Complete sequencing and characterization of 21,243 full-length human cDNAs.</title>
        <authorList>
            <person name="Ota T."/>
            <person name="Suzuki Y."/>
            <person name="Nishikawa T."/>
            <person name="Otsuki T."/>
            <person name="Sugiyama T."/>
            <person name="Irie R."/>
            <person name="Wakamatsu A."/>
            <person name="Hayashi K."/>
            <person name="Sato H."/>
            <person name="Nagai K."/>
            <person name="Kimura K."/>
            <person name="Makita H."/>
            <person name="Sekine M."/>
            <person name="Obayashi M."/>
            <person name="Nishi T."/>
            <person name="Shibahara T."/>
            <person name="Tanaka T."/>
            <person name="Ishii S."/>
            <person name="Yamamoto J."/>
            <person name="Saito K."/>
            <person name="Kawai Y."/>
            <person name="Isono Y."/>
            <person name="Nakamura Y."/>
            <person name="Nagahari K."/>
            <person name="Murakami K."/>
            <person name="Yasuda T."/>
            <person name="Iwayanagi T."/>
            <person name="Wagatsuma M."/>
            <person name="Shiratori A."/>
            <person name="Sudo H."/>
            <person name="Hosoiri T."/>
            <person name="Kaku Y."/>
            <person name="Kodaira H."/>
            <person name="Kondo H."/>
            <person name="Sugawara M."/>
            <person name="Takahashi M."/>
            <person name="Kanda K."/>
            <person name="Yokoi T."/>
            <person name="Furuya T."/>
            <person name="Kikkawa E."/>
            <person name="Omura Y."/>
            <person name="Abe K."/>
            <person name="Kamihara K."/>
            <person name="Katsuta N."/>
            <person name="Sato K."/>
            <person name="Tanikawa M."/>
            <person name="Yamazaki M."/>
            <person name="Ninomiya K."/>
            <person name="Ishibashi T."/>
            <person name="Yamashita H."/>
            <person name="Murakawa K."/>
            <person name="Fujimori K."/>
            <person name="Tanai H."/>
            <person name="Kimata M."/>
            <person name="Watanabe M."/>
            <person name="Hiraoka S."/>
            <person name="Chiba Y."/>
            <person name="Ishida S."/>
            <person name="Ono Y."/>
            <person name="Takiguchi S."/>
            <person name="Watanabe S."/>
            <person name="Yosida M."/>
            <person name="Hotuta T."/>
            <person name="Kusano J."/>
            <person name="Kanehori K."/>
            <person name="Takahashi-Fujii A."/>
            <person name="Hara H."/>
            <person name="Tanase T.-O."/>
            <person name="Nomura Y."/>
            <person name="Togiya S."/>
            <person name="Komai F."/>
            <person name="Hara R."/>
            <person name="Takeuchi K."/>
            <person name="Arita M."/>
            <person name="Imose N."/>
            <person name="Musashino K."/>
            <person name="Yuuki H."/>
            <person name="Oshima A."/>
            <person name="Sasaki N."/>
            <person name="Aotsuka S."/>
            <person name="Yoshikawa Y."/>
            <person name="Matsunawa H."/>
            <person name="Ichihara T."/>
            <person name="Shiohata N."/>
            <person name="Sano S."/>
            <person name="Moriya S."/>
            <person name="Momiyama H."/>
            <person name="Satoh N."/>
            <person name="Takami S."/>
            <person name="Terashima Y."/>
            <person name="Suzuki O."/>
            <person name="Nakagawa S."/>
            <person name="Senoh A."/>
            <person name="Mizoguchi H."/>
            <person name="Goto Y."/>
            <person name="Shimizu F."/>
            <person name="Wakebe H."/>
            <person name="Hishigaki H."/>
            <person name="Watanabe T."/>
            <person name="Sugiyama A."/>
            <person name="Takemoto M."/>
            <person name="Kawakami B."/>
            <person name="Yamazaki M."/>
            <person name="Watanabe K."/>
            <person name="Kumagai A."/>
            <person name="Itakura S."/>
            <person name="Fukuzumi Y."/>
            <person name="Fujimori Y."/>
            <person name="Komiyama M."/>
            <person name="Tashiro H."/>
            <person name="Tanigami A."/>
            <person name="Fujiwara T."/>
            <person name="Ono T."/>
            <person name="Yamada K."/>
            <person name="Fujii Y."/>
            <person name="Ozaki K."/>
            <person name="Hirao M."/>
            <person name="Ohmori Y."/>
            <person name="Kawabata A."/>
            <person name="Hikiji T."/>
            <person name="Kobatake N."/>
            <person name="Inagaki H."/>
            <person name="Ikema Y."/>
            <person name="Okamoto S."/>
            <person name="Okitani R."/>
            <person name="Kawakami T."/>
            <person name="Noguchi S."/>
            <person name="Itoh T."/>
            <person name="Shigeta K."/>
            <person name="Senba T."/>
            <person name="Matsumura K."/>
            <person name="Nakajima Y."/>
            <person name="Mizuno T."/>
            <person name="Morinaga M."/>
            <person name="Sasaki M."/>
            <person name="Togashi T."/>
            <person name="Oyama M."/>
            <person name="Hata H."/>
            <person name="Watanabe M."/>
            <person name="Komatsu T."/>
            <person name="Mizushima-Sugano J."/>
            <person name="Satoh T."/>
            <person name="Shirai Y."/>
            <person name="Takahashi Y."/>
            <person name="Nakagawa K."/>
            <person name="Okumura K."/>
            <person name="Nagase T."/>
            <person name="Nomura N."/>
            <person name="Kikuchi H."/>
            <person name="Masuho Y."/>
            <person name="Yamashita R."/>
            <person name="Nakai K."/>
            <person name="Yada T."/>
            <person name="Nakamura Y."/>
            <person name="Ohara O."/>
            <person name="Isogai T."/>
            <person name="Sugano S."/>
        </authorList>
    </citation>
    <scope>NUCLEOTIDE SEQUENCE [LARGE SCALE MRNA] OF 283-716</scope>
</reference>
<reference key="6">
    <citation type="journal article" date="2004" name="Protein Sci.">
        <title>Signal peptide prediction based on analysis of experimentally verified cleavage sites.</title>
        <authorList>
            <person name="Zhang Z."/>
            <person name="Henzel W.J."/>
        </authorList>
    </citation>
    <scope>PROTEIN SEQUENCE OF 26-40</scope>
</reference>
<name>LRRN1_HUMAN</name>
<organism>
    <name type="scientific">Homo sapiens</name>
    <name type="common">Human</name>
    <dbReference type="NCBI Taxonomy" id="9606"/>
    <lineage>
        <taxon>Eukaryota</taxon>
        <taxon>Metazoa</taxon>
        <taxon>Chordata</taxon>
        <taxon>Craniata</taxon>
        <taxon>Vertebrata</taxon>
        <taxon>Euteleostomi</taxon>
        <taxon>Mammalia</taxon>
        <taxon>Eutheria</taxon>
        <taxon>Euarchontoglires</taxon>
        <taxon>Primates</taxon>
        <taxon>Haplorrhini</taxon>
        <taxon>Catarrhini</taxon>
        <taxon>Hominidae</taxon>
        <taxon>Homo</taxon>
    </lineage>
</organism>
<protein>
    <recommendedName>
        <fullName>Leucine-rich repeat neuronal protein 1</fullName>
    </recommendedName>
    <alternativeName>
        <fullName>Neuronal leucine-rich repeat protein 1</fullName>
        <shortName>NLRR-1</shortName>
    </alternativeName>
</protein>
<comment type="interaction">
    <interactant intactId="EBI-12136157">
        <id>Q6UXK5</id>
    </interactant>
    <interactant intactId="EBI-359224">
        <id>Q13077</id>
        <label>TRAF1</label>
    </interactant>
    <organismsDiffer>false</organismsDiffer>
    <experiments>3</experiments>
</comment>
<comment type="subcellular location">
    <subcellularLocation>
        <location evidence="6">Membrane</location>
        <topology evidence="6">Single-pass type I membrane protein</topology>
    </subcellularLocation>
</comment>
<comment type="sequence caution" evidence="6">
    <conflict type="erroneous initiation">
        <sequence resource="EMBL-CDS" id="BAA96021"/>
    </conflict>
</comment>
<comment type="sequence caution" evidence="6">
    <conflict type="erroneous initiation">
        <sequence resource="EMBL-CDS" id="BAB14500"/>
    </conflict>
</comment>
<accession>Q6UXK5</accession>
<accession>Q3LID5</accession>
<accession>Q8IYV5</accession>
<accession>Q9H8V1</accession>
<accession>Q9P231</accession>
<keyword id="KW-0903">Direct protein sequencing</keyword>
<keyword id="KW-1015">Disulfide bond</keyword>
<keyword id="KW-0325">Glycoprotein</keyword>
<keyword id="KW-0393">Immunoglobulin domain</keyword>
<keyword id="KW-0433">Leucine-rich repeat</keyword>
<keyword id="KW-0472">Membrane</keyword>
<keyword id="KW-1267">Proteomics identification</keyword>
<keyword id="KW-1185">Reference proteome</keyword>
<keyword id="KW-0677">Repeat</keyword>
<keyword id="KW-0732">Signal</keyword>
<keyword id="KW-0812">Transmembrane</keyword>
<keyword id="KW-1133">Transmembrane helix</keyword>